<feature type="chain" id="PRO_0000306574" description="Small ribosomal subunit protein uS13">
    <location>
        <begin position="1"/>
        <end position="119"/>
    </location>
</feature>
<feature type="region of interest" description="Disordered" evidence="2">
    <location>
        <begin position="96"/>
        <end position="119"/>
    </location>
</feature>
<organism>
    <name type="scientific">Buchnera aphidicola subsp. Cinara cedri (strain Cc)</name>
    <dbReference type="NCBI Taxonomy" id="372461"/>
    <lineage>
        <taxon>Bacteria</taxon>
        <taxon>Pseudomonadati</taxon>
        <taxon>Pseudomonadota</taxon>
        <taxon>Gammaproteobacteria</taxon>
        <taxon>Enterobacterales</taxon>
        <taxon>Erwiniaceae</taxon>
        <taxon>Buchnera</taxon>
    </lineage>
</organism>
<comment type="function">
    <text evidence="1">Located at the top of the head of the 30S subunit, it contacts several helices of the 16S rRNA. In the 70S ribosome it contacts the 23S rRNA (bridge B1a) and protein L5 of the 50S subunit (bridge B1b), connecting the 2 subunits; these bridges are implicated in subunit movement. Contacts the tRNAs in the A and P-sites.</text>
</comment>
<comment type="subunit">
    <text evidence="1">Part of the 30S ribosomal subunit. Forms a loose heterodimer with protein S19. Forms two bridges to the 50S subunit in the 70S ribosome.</text>
</comment>
<comment type="similarity">
    <text evidence="1">Belongs to the universal ribosomal protein uS13 family.</text>
</comment>
<dbReference type="EMBL" id="CP000263">
    <property type="protein sequence ID" value="ABJ90773.1"/>
    <property type="molecule type" value="Genomic_DNA"/>
</dbReference>
<dbReference type="RefSeq" id="WP_011672692.1">
    <property type="nucleotide sequence ID" value="NC_008513.1"/>
</dbReference>
<dbReference type="SMR" id="Q057C6"/>
<dbReference type="STRING" id="372461.BCc_319"/>
<dbReference type="KEGG" id="bcc:BCc_319"/>
<dbReference type="eggNOG" id="COG0099">
    <property type="taxonomic scope" value="Bacteria"/>
</dbReference>
<dbReference type="HOGENOM" id="CLU_103849_1_2_6"/>
<dbReference type="OrthoDB" id="9803610at2"/>
<dbReference type="Proteomes" id="UP000000669">
    <property type="component" value="Chromosome"/>
</dbReference>
<dbReference type="GO" id="GO:0005829">
    <property type="term" value="C:cytosol"/>
    <property type="evidence" value="ECO:0007669"/>
    <property type="project" value="TreeGrafter"/>
</dbReference>
<dbReference type="GO" id="GO:0015935">
    <property type="term" value="C:small ribosomal subunit"/>
    <property type="evidence" value="ECO:0007669"/>
    <property type="project" value="TreeGrafter"/>
</dbReference>
<dbReference type="GO" id="GO:0019843">
    <property type="term" value="F:rRNA binding"/>
    <property type="evidence" value="ECO:0007669"/>
    <property type="project" value="UniProtKB-UniRule"/>
</dbReference>
<dbReference type="GO" id="GO:0003735">
    <property type="term" value="F:structural constituent of ribosome"/>
    <property type="evidence" value="ECO:0007669"/>
    <property type="project" value="InterPro"/>
</dbReference>
<dbReference type="GO" id="GO:0000049">
    <property type="term" value="F:tRNA binding"/>
    <property type="evidence" value="ECO:0007669"/>
    <property type="project" value="UniProtKB-UniRule"/>
</dbReference>
<dbReference type="GO" id="GO:0006412">
    <property type="term" value="P:translation"/>
    <property type="evidence" value="ECO:0007669"/>
    <property type="project" value="UniProtKB-UniRule"/>
</dbReference>
<dbReference type="FunFam" id="1.10.8.50:FF:000001">
    <property type="entry name" value="30S ribosomal protein S13"/>
    <property type="match status" value="1"/>
</dbReference>
<dbReference type="FunFam" id="4.10.910.10:FF:000001">
    <property type="entry name" value="30S ribosomal protein S13"/>
    <property type="match status" value="1"/>
</dbReference>
<dbReference type="Gene3D" id="1.10.8.50">
    <property type="match status" value="1"/>
</dbReference>
<dbReference type="Gene3D" id="4.10.910.10">
    <property type="entry name" value="30s ribosomal protein s13, domain 2"/>
    <property type="match status" value="1"/>
</dbReference>
<dbReference type="HAMAP" id="MF_01315">
    <property type="entry name" value="Ribosomal_uS13"/>
    <property type="match status" value="1"/>
</dbReference>
<dbReference type="InterPro" id="IPR027437">
    <property type="entry name" value="Rbsml_uS13_C"/>
</dbReference>
<dbReference type="InterPro" id="IPR001892">
    <property type="entry name" value="Ribosomal_uS13"/>
</dbReference>
<dbReference type="InterPro" id="IPR010979">
    <property type="entry name" value="Ribosomal_uS13-like_H2TH"/>
</dbReference>
<dbReference type="InterPro" id="IPR019980">
    <property type="entry name" value="Ribosomal_uS13_bac-type"/>
</dbReference>
<dbReference type="InterPro" id="IPR018269">
    <property type="entry name" value="Ribosomal_uS13_CS"/>
</dbReference>
<dbReference type="NCBIfam" id="TIGR03631">
    <property type="entry name" value="uS13_bact"/>
    <property type="match status" value="1"/>
</dbReference>
<dbReference type="PANTHER" id="PTHR10871">
    <property type="entry name" value="30S RIBOSOMAL PROTEIN S13/40S RIBOSOMAL PROTEIN S18"/>
    <property type="match status" value="1"/>
</dbReference>
<dbReference type="PANTHER" id="PTHR10871:SF1">
    <property type="entry name" value="SMALL RIBOSOMAL SUBUNIT PROTEIN US13M"/>
    <property type="match status" value="1"/>
</dbReference>
<dbReference type="Pfam" id="PF00416">
    <property type="entry name" value="Ribosomal_S13"/>
    <property type="match status" value="1"/>
</dbReference>
<dbReference type="PIRSF" id="PIRSF002134">
    <property type="entry name" value="Ribosomal_S13"/>
    <property type="match status" value="1"/>
</dbReference>
<dbReference type="SUPFAM" id="SSF46946">
    <property type="entry name" value="S13-like H2TH domain"/>
    <property type="match status" value="1"/>
</dbReference>
<dbReference type="PROSITE" id="PS00646">
    <property type="entry name" value="RIBOSOMAL_S13_1"/>
    <property type="match status" value="1"/>
</dbReference>
<dbReference type="PROSITE" id="PS50159">
    <property type="entry name" value="RIBOSOMAL_S13_2"/>
    <property type="match status" value="1"/>
</dbReference>
<keyword id="KW-1185">Reference proteome</keyword>
<keyword id="KW-0687">Ribonucleoprotein</keyword>
<keyword id="KW-0689">Ribosomal protein</keyword>
<keyword id="KW-0694">RNA-binding</keyword>
<keyword id="KW-0699">rRNA-binding</keyword>
<keyword id="KW-0820">tRNA-binding</keyword>
<accession>Q057C6</accession>
<protein>
    <recommendedName>
        <fullName evidence="1">Small ribosomal subunit protein uS13</fullName>
    </recommendedName>
    <alternativeName>
        <fullName evidence="3">30S ribosomal protein S13</fullName>
    </alternativeName>
</protein>
<sequence>MTRIAGINISDKKHILVALTSIYGIGISLSKKICFSIGIRCDVKINSLTKEKIESLRSIISKFLVEGDLRREKTINIKRLMDIGCYRGLRHRKHLPVRGQRTKTNARTRKGPRKLIKSR</sequence>
<evidence type="ECO:0000255" key="1">
    <source>
        <dbReference type="HAMAP-Rule" id="MF_01315"/>
    </source>
</evidence>
<evidence type="ECO:0000256" key="2">
    <source>
        <dbReference type="SAM" id="MobiDB-lite"/>
    </source>
</evidence>
<evidence type="ECO:0000305" key="3"/>
<name>RS13_BUCCC</name>
<proteinExistence type="inferred from homology"/>
<reference key="1">
    <citation type="journal article" date="2006" name="Science">
        <title>A small microbial genome: the end of a long symbiotic relationship?</title>
        <authorList>
            <person name="Perez-Brocal V."/>
            <person name="Gil R."/>
            <person name="Ramos S."/>
            <person name="Lamelas A."/>
            <person name="Postigo M."/>
            <person name="Michelena J.M."/>
            <person name="Silva F.J."/>
            <person name="Moya A."/>
            <person name="Latorre A."/>
        </authorList>
    </citation>
    <scope>NUCLEOTIDE SEQUENCE [LARGE SCALE GENOMIC DNA]</scope>
    <source>
        <strain>Cc</strain>
    </source>
</reference>
<gene>
    <name evidence="1" type="primary">rpsM</name>
    <name type="ordered locus">BCc_319</name>
</gene>